<evidence type="ECO:0000250" key="1"/>
<evidence type="ECO:0000250" key="2">
    <source>
        <dbReference type="UniProtKB" id="Q38997"/>
    </source>
</evidence>
<evidence type="ECO:0000250" key="3">
    <source>
        <dbReference type="UniProtKB" id="Q93V58"/>
    </source>
</evidence>
<evidence type="ECO:0000255" key="4">
    <source>
        <dbReference type="PROSITE-ProRule" id="PRU00159"/>
    </source>
</evidence>
<evidence type="ECO:0000255" key="5">
    <source>
        <dbReference type="PROSITE-ProRule" id="PRU00256"/>
    </source>
</evidence>
<evidence type="ECO:0000255" key="6">
    <source>
        <dbReference type="PROSITE-ProRule" id="PRU10027"/>
    </source>
</evidence>
<evidence type="ECO:0000269" key="7">
    <source>
    </source>
</evidence>
<evidence type="ECO:0000269" key="8">
    <source>
    </source>
</evidence>
<evidence type="ECO:0000269" key="9">
    <source>
    </source>
</evidence>
<evidence type="ECO:0000303" key="10">
    <source>
    </source>
</evidence>
<evidence type="ECO:0000303" key="11">
    <source>
    </source>
</evidence>
<evidence type="ECO:0000305" key="12"/>
<sequence length="447" mass="50505">MSGSRRKATPASRTRVGNYEMGRTLGEGSFAKVKYAKNTVTGDQAAIKILDREKVFRHKMVEQLKREISTMKLIKHPNVVEIIEVMASKTKIYIVLELVNGGELFDKIAQQGRLKEDEARRYFQQLINAVDYCHSRGVYHRDLKPENLILDANGVLKVSDFGLSAFSRQVREDGLLHTACGTPNYVAPEVLSDKGYDGAAADVWSCGVILFVLMAGYLPFDEPNLMTLYKRICKAEFSCPPWFSQGAKRVIKRILEPNPITRISIAELLEDEWFKKGYKPPSFDQDDEDITIDDVDAAFSNSKECLVTEKKEKPVSMNAFELISSSSEFSLENLFEKQAQLVKKETRFTSQRSASEIMSKMEETAKPLGFNVRKDNYKIKMKGDKSGRKGQLSVATEVFEVAPSLHVVELRKTGGDTLEFHKFYKNFSSGLKDVVWNTDAAAEEQKQ</sequence>
<gene>
    <name type="primary">CIPK9</name>
    <name type="synonym">PKS6</name>
    <name type="synonym">SnRK3.12</name>
    <name type="ordered locus">At1g01140</name>
    <name type="ORF">F6F3.28</name>
    <name type="ORF">T25K16.13</name>
</gene>
<reference key="1">
    <citation type="journal article" date="2001" name="EMBO J.">
        <title>The NAF domain defines a novel protein-protein interaction module conserved in Ca(2+)-regulated kinases.</title>
        <authorList>
            <person name="Albrecht V."/>
            <person name="Ritz O."/>
            <person name="Linder S."/>
            <person name="Harter K."/>
            <person name="Kudla J."/>
        </authorList>
    </citation>
    <scope>NUCLEOTIDE SEQUENCE [MRNA] (ISOFORM 2)</scope>
    <scope>INTERACTION WITH CBL2</scope>
</reference>
<reference key="2">
    <citation type="journal article" date="2001" name="Plant Cell">
        <title>Molecular characterization of functional domains in the protein kinase SOS2 that is required for plant salt tolerance.</title>
        <authorList>
            <person name="Guo Y."/>
            <person name="Halfter U."/>
            <person name="Ishitani M."/>
            <person name="Zhu J.-K."/>
        </authorList>
    </citation>
    <scope>NUCLEOTIDE SEQUENCE [MRNA] (ISOFORM 4)</scope>
    <scope>TISSUE SPECIFICITY</scope>
    <source>
        <strain>cv. Columbia</strain>
    </source>
</reference>
<reference key="3">
    <citation type="journal article" date="2000" name="Nature">
        <title>Sequence and analysis of chromosome 1 of the plant Arabidopsis thaliana.</title>
        <authorList>
            <person name="Theologis A."/>
            <person name="Ecker J.R."/>
            <person name="Palm C.J."/>
            <person name="Federspiel N.A."/>
            <person name="Kaul S."/>
            <person name="White O."/>
            <person name="Alonso J."/>
            <person name="Altafi H."/>
            <person name="Araujo R."/>
            <person name="Bowman C.L."/>
            <person name="Brooks S.Y."/>
            <person name="Buehler E."/>
            <person name="Chan A."/>
            <person name="Chao Q."/>
            <person name="Chen H."/>
            <person name="Cheuk R.F."/>
            <person name="Chin C.W."/>
            <person name="Chung M.K."/>
            <person name="Conn L."/>
            <person name="Conway A.B."/>
            <person name="Conway A.R."/>
            <person name="Creasy T.H."/>
            <person name="Dewar K."/>
            <person name="Dunn P."/>
            <person name="Etgu P."/>
            <person name="Feldblyum T.V."/>
            <person name="Feng J.-D."/>
            <person name="Fong B."/>
            <person name="Fujii C.Y."/>
            <person name="Gill J.E."/>
            <person name="Goldsmith A.D."/>
            <person name="Haas B."/>
            <person name="Hansen N.F."/>
            <person name="Hughes B."/>
            <person name="Huizar L."/>
            <person name="Hunter J.L."/>
            <person name="Jenkins J."/>
            <person name="Johnson-Hopson C."/>
            <person name="Khan S."/>
            <person name="Khaykin E."/>
            <person name="Kim C.J."/>
            <person name="Koo H.L."/>
            <person name="Kremenetskaia I."/>
            <person name="Kurtz D.B."/>
            <person name="Kwan A."/>
            <person name="Lam B."/>
            <person name="Langin-Hooper S."/>
            <person name="Lee A."/>
            <person name="Lee J.M."/>
            <person name="Lenz C.A."/>
            <person name="Li J.H."/>
            <person name="Li Y.-P."/>
            <person name="Lin X."/>
            <person name="Liu S.X."/>
            <person name="Liu Z.A."/>
            <person name="Luros J.S."/>
            <person name="Maiti R."/>
            <person name="Marziali A."/>
            <person name="Militscher J."/>
            <person name="Miranda M."/>
            <person name="Nguyen M."/>
            <person name="Nierman W.C."/>
            <person name="Osborne B.I."/>
            <person name="Pai G."/>
            <person name="Peterson J."/>
            <person name="Pham P.K."/>
            <person name="Rizzo M."/>
            <person name="Rooney T."/>
            <person name="Rowley D."/>
            <person name="Sakano H."/>
            <person name="Salzberg S.L."/>
            <person name="Schwartz J.R."/>
            <person name="Shinn P."/>
            <person name="Southwick A.M."/>
            <person name="Sun H."/>
            <person name="Tallon L.J."/>
            <person name="Tambunga G."/>
            <person name="Toriumi M.J."/>
            <person name="Town C.D."/>
            <person name="Utterback T."/>
            <person name="Van Aken S."/>
            <person name="Vaysberg M."/>
            <person name="Vysotskaia V.S."/>
            <person name="Walker M."/>
            <person name="Wu D."/>
            <person name="Yu G."/>
            <person name="Fraser C.M."/>
            <person name="Venter J.C."/>
            <person name="Davis R.W."/>
        </authorList>
    </citation>
    <scope>NUCLEOTIDE SEQUENCE [LARGE SCALE GENOMIC DNA]</scope>
    <source>
        <strain>cv. Columbia</strain>
    </source>
</reference>
<reference key="4">
    <citation type="journal article" date="2017" name="Plant J.">
        <title>Araport11: a complete reannotation of the Arabidopsis thaliana reference genome.</title>
        <authorList>
            <person name="Cheng C.Y."/>
            <person name="Krishnakumar V."/>
            <person name="Chan A.P."/>
            <person name="Thibaud-Nissen F."/>
            <person name="Schobel S."/>
            <person name="Town C.D."/>
        </authorList>
    </citation>
    <scope>GENOME REANNOTATION</scope>
    <source>
        <strain>cv. Columbia</strain>
    </source>
</reference>
<reference key="5">
    <citation type="journal article" date="2003" name="Science">
        <title>Empirical analysis of transcriptional activity in the Arabidopsis genome.</title>
        <authorList>
            <person name="Yamada K."/>
            <person name="Lim J."/>
            <person name="Dale J.M."/>
            <person name="Chen H."/>
            <person name="Shinn P."/>
            <person name="Palm C.J."/>
            <person name="Southwick A.M."/>
            <person name="Wu H.C."/>
            <person name="Kim C.J."/>
            <person name="Nguyen M."/>
            <person name="Pham P.K."/>
            <person name="Cheuk R.F."/>
            <person name="Karlin-Newmann G."/>
            <person name="Liu S.X."/>
            <person name="Lam B."/>
            <person name="Sakano H."/>
            <person name="Wu T."/>
            <person name="Yu G."/>
            <person name="Miranda M."/>
            <person name="Quach H.L."/>
            <person name="Tripp M."/>
            <person name="Chang C.H."/>
            <person name="Lee J.M."/>
            <person name="Toriumi M.J."/>
            <person name="Chan M.M."/>
            <person name="Tang C.C."/>
            <person name="Onodera C.S."/>
            <person name="Deng J.M."/>
            <person name="Akiyama K."/>
            <person name="Ansari Y."/>
            <person name="Arakawa T."/>
            <person name="Banh J."/>
            <person name="Banno F."/>
            <person name="Bowser L."/>
            <person name="Brooks S.Y."/>
            <person name="Carninci P."/>
            <person name="Chao Q."/>
            <person name="Choy N."/>
            <person name="Enju A."/>
            <person name="Goldsmith A.D."/>
            <person name="Gurjal M."/>
            <person name="Hansen N.F."/>
            <person name="Hayashizaki Y."/>
            <person name="Johnson-Hopson C."/>
            <person name="Hsuan V.W."/>
            <person name="Iida K."/>
            <person name="Karnes M."/>
            <person name="Khan S."/>
            <person name="Koesema E."/>
            <person name="Ishida J."/>
            <person name="Jiang P.X."/>
            <person name="Jones T."/>
            <person name="Kawai J."/>
            <person name="Kamiya A."/>
            <person name="Meyers C."/>
            <person name="Nakajima M."/>
            <person name="Narusaka M."/>
            <person name="Seki M."/>
            <person name="Sakurai T."/>
            <person name="Satou M."/>
            <person name="Tamse R."/>
            <person name="Vaysberg M."/>
            <person name="Wallender E.K."/>
            <person name="Wong C."/>
            <person name="Yamamura Y."/>
            <person name="Yuan S."/>
            <person name="Shinozaki K."/>
            <person name="Davis R.W."/>
            <person name="Theologis A."/>
            <person name="Ecker J.R."/>
        </authorList>
    </citation>
    <scope>NUCLEOTIDE SEQUENCE [LARGE SCALE MRNA] (ISOFORM 3)</scope>
    <source>
        <strain>cv. Columbia</strain>
    </source>
</reference>
<reference key="6">
    <citation type="journal article" date="2003" name="Plant Physiol.">
        <title>The Arabidopsis CDPK-SnRK superfamily of protein kinases.</title>
        <authorList>
            <person name="Hrabak E.M."/>
            <person name="Chan C.W.M."/>
            <person name="Gribskov M."/>
            <person name="Harper J.F."/>
            <person name="Choi J.H."/>
            <person name="Halford N."/>
            <person name="Kudla J."/>
            <person name="Luan S."/>
            <person name="Nimmo H.G."/>
            <person name="Sussman M.R."/>
            <person name="Thomas M."/>
            <person name="Walker-Simmons K."/>
            <person name="Zhu J.-K."/>
            <person name="Harmon A.C."/>
        </authorList>
    </citation>
    <scope>GENE FAMILY</scope>
    <scope>NOMENCLATURE</scope>
</reference>
<reference key="7">
    <citation type="journal article" date="2013" name="Plant Physiol.">
        <title>A protein kinase, calcineurin B-like protein-interacting protein Kinase9, interacts with calcium sensor calcineurin B-like Protein3 and regulates potassium homeostasis under low-potassium stress in Arabidopsis.</title>
        <authorList>
            <person name="Liu L.L."/>
            <person name="Ren H.M."/>
            <person name="Chen L.Q."/>
            <person name="Wang Y."/>
            <person name="Wu W.H."/>
        </authorList>
    </citation>
    <scope>FUNCTION</scope>
    <scope>INTERACTION WITH CBL2 AND CBL3</scope>
    <scope>TISSUE SPECIFICITY</scope>
    <scope>SUBCELLULAR LOCATION</scope>
</reference>
<comment type="function">
    <text evidence="9">CIPK serine-threonine protein kinases interact with CBL proteins. Binding of a CBL protein to the regulatory NAF domain of CIPK protein lead to the activation of the kinase in a calcium-dependent manner. Involved in K(+) homeostasis under low-K(+) stress.</text>
</comment>
<comment type="catalytic activity">
    <reaction>
        <text>L-seryl-[protein] + ATP = O-phospho-L-seryl-[protein] + ADP + H(+)</text>
        <dbReference type="Rhea" id="RHEA:17989"/>
        <dbReference type="Rhea" id="RHEA-COMP:9863"/>
        <dbReference type="Rhea" id="RHEA-COMP:11604"/>
        <dbReference type="ChEBI" id="CHEBI:15378"/>
        <dbReference type="ChEBI" id="CHEBI:29999"/>
        <dbReference type="ChEBI" id="CHEBI:30616"/>
        <dbReference type="ChEBI" id="CHEBI:83421"/>
        <dbReference type="ChEBI" id="CHEBI:456216"/>
        <dbReference type="EC" id="2.7.11.1"/>
    </reaction>
</comment>
<comment type="catalytic activity">
    <reaction>
        <text>L-threonyl-[protein] + ATP = O-phospho-L-threonyl-[protein] + ADP + H(+)</text>
        <dbReference type="Rhea" id="RHEA:46608"/>
        <dbReference type="Rhea" id="RHEA-COMP:11060"/>
        <dbReference type="Rhea" id="RHEA-COMP:11605"/>
        <dbReference type="ChEBI" id="CHEBI:15378"/>
        <dbReference type="ChEBI" id="CHEBI:30013"/>
        <dbReference type="ChEBI" id="CHEBI:30616"/>
        <dbReference type="ChEBI" id="CHEBI:61977"/>
        <dbReference type="ChEBI" id="CHEBI:456216"/>
        <dbReference type="EC" id="2.7.11.1"/>
    </reaction>
</comment>
<comment type="cofactor">
    <cofactor evidence="1">
        <name>Mn(2+)</name>
        <dbReference type="ChEBI" id="CHEBI:29035"/>
    </cofactor>
</comment>
<comment type="subunit">
    <text evidence="7 9">Interacts with CBL2 and CBL3.</text>
</comment>
<comment type="interaction">
    <interactant intactId="EBI-1765282">
        <id>Q9MAM1</id>
    </interactant>
    <interactant intactId="EBI-4426649">
        <id>Q17TI5</id>
        <label>BRX</label>
    </interactant>
    <organismsDiffer>false</organismsDiffer>
    <experiments>4</experiments>
</comment>
<comment type="interaction">
    <interactant intactId="EBI-1765282">
        <id>Q9MAM1</id>
    </interactant>
    <interactant intactId="EBI-637381">
        <id>Q9LTB8</id>
        <label>CBL9</label>
    </interactant>
    <organismsDiffer>false</organismsDiffer>
    <experiments>4</experiments>
</comment>
<comment type="interaction">
    <interactant intactId="EBI-1765282">
        <id>Q9MAM1</id>
    </interactant>
    <interactant intactId="EBI-1238013">
        <id>O22179</id>
        <label>MYB70</label>
    </interactant>
    <organismsDiffer>false</organismsDiffer>
    <experiments>4</experiments>
</comment>
<comment type="interaction">
    <interactant intactId="EBI-1765282">
        <id>Q9MAM1</id>
    </interactant>
    <interactant intactId="EBI-25506855">
        <id>O23160</id>
        <label>MYB73</label>
    </interactant>
    <organismsDiffer>false</organismsDiffer>
    <experiments>5</experiments>
</comment>
<comment type="subcellular location">
    <subcellularLocation>
        <location evidence="9">Cytoplasm</location>
    </subcellularLocation>
    <subcellularLocation>
        <location evidence="9">Nucleus</location>
    </subcellularLocation>
    <text>Targeted to the tonoplast when interacting with CBL2 or CBL3.</text>
</comment>
<comment type="alternative products">
    <event type="alternative splicing"/>
    <isoform>
        <id>Q9MAM1-3</id>
        <name>3</name>
        <sequence type="displayed"/>
    </isoform>
    <isoform>
        <id>Q9MAM1-1</id>
        <name>1</name>
        <sequence type="described" ref="VSP_033983 VSP_033984"/>
    </isoform>
    <isoform>
        <id>Q9MAM1-2</id>
        <name>2</name>
        <sequence type="described" ref="VSP_033983"/>
    </isoform>
    <isoform>
        <id>Q9MAM1-4</id>
        <name>4</name>
        <sequence type="described" ref="VSP_033984"/>
    </isoform>
</comment>
<comment type="tissue specificity">
    <text evidence="8 9">Expressed at low levels in roots and shoots. Detected in root vascular bundles and in the leaf vascular tissue and hydathode, but not in root tips.</text>
</comment>
<comment type="domain">
    <text evidence="1">The activation loop within the kinase domain is the target of phosphorylation/activation by upstream protein kinases. The PPI motif mediates the interaction with the ABI (abscisic acid-insensitive) phosphatases (By similarity).</text>
</comment>
<comment type="miscellaneous">
    <molecule>Isoform 1</molecule>
    <text evidence="12">May be due to a competing donor splice site.</text>
</comment>
<comment type="miscellaneous">
    <molecule>Isoform 2</molecule>
    <text evidence="12">May be due to a competing donor splice site.</text>
</comment>
<comment type="miscellaneous">
    <molecule>Isoform 4</molecule>
    <text evidence="12">May be due to a competing donor splice site.</text>
</comment>
<comment type="similarity">
    <text evidence="12">Belongs to the protein kinase superfamily. CAMK Ser/Thr protein kinase family. SNF1 subfamily.</text>
</comment>
<keyword id="KW-0025">Alternative splicing</keyword>
<keyword id="KW-0067">ATP-binding</keyword>
<keyword id="KW-0963">Cytoplasm</keyword>
<keyword id="KW-0418">Kinase</keyword>
<keyword id="KW-0464">Manganese</keyword>
<keyword id="KW-0547">Nucleotide-binding</keyword>
<keyword id="KW-0539">Nucleus</keyword>
<keyword id="KW-0597">Phosphoprotein</keyword>
<keyword id="KW-1185">Reference proteome</keyword>
<keyword id="KW-0723">Serine/threonine-protein kinase</keyword>
<keyword id="KW-0808">Transferase</keyword>
<accession>Q9MAM1</accession>
<accession>Q3EDL5</accession>
<accession>Q94F03</accession>
<accession>Q9C5P5</accession>
<accession>Q9C5S4</accession>
<proteinExistence type="evidence at protein level"/>
<protein>
    <recommendedName>
        <fullName>CBL-interacting serine/threonine-protein kinase 9</fullName>
        <ecNumber>2.7.11.1</ecNumber>
    </recommendedName>
    <alternativeName>
        <fullName>SNF1-related kinase 3.12</fullName>
    </alternativeName>
    <alternativeName>
        <fullName>SOS2-like protein kinase PKS6</fullName>
    </alternativeName>
</protein>
<feature type="chain" id="PRO_0000337212" description="CBL-interacting serine/threonine-protein kinase 9">
    <location>
        <begin position="1"/>
        <end position="447"/>
    </location>
</feature>
<feature type="domain" description="Protein kinase" evidence="4">
    <location>
        <begin position="19"/>
        <end position="274"/>
    </location>
</feature>
<feature type="domain" description="NAF" evidence="5">
    <location>
        <begin position="312"/>
        <end position="336"/>
    </location>
</feature>
<feature type="region of interest" description="Activation loop" evidence="1">
    <location>
        <begin position="160"/>
        <end position="189"/>
    </location>
</feature>
<feature type="region of interest" description="PPI" evidence="1">
    <location>
        <begin position="343"/>
        <end position="372"/>
    </location>
</feature>
<feature type="active site" description="Proton acceptor" evidence="4 6">
    <location>
        <position position="142"/>
    </location>
</feature>
<feature type="binding site" evidence="4">
    <location>
        <begin position="25"/>
        <end position="33"/>
    </location>
    <ligand>
        <name>ATP</name>
        <dbReference type="ChEBI" id="CHEBI:30616"/>
    </ligand>
</feature>
<feature type="binding site" evidence="4">
    <location>
        <position position="48"/>
    </location>
    <ligand>
        <name>ATP</name>
        <dbReference type="ChEBI" id="CHEBI:30616"/>
    </ligand>
</feature>
<feature type="modified residue" description="Phosphoserine" evidence="3">
    <location>
        <position position="164"/>
    </location>
</feature>
<feature type="modified residue" description="Phosphothreonine" evidence="2">
    <location>
        <position position="178"/>
    </location>
</feature>
<feature type="splice variant" id="VSP_033983" description="In isoform 1 and isoform 2." evidence="10">
    <original>R</original>
    <variation>RVR</variation>
    <location>
        <position position="231"/>
    </location>
</feature>
<feature type="splice variant" id="VSP_033984" description="In isoform 1 and isoform 4." evidence="11">
    <original>K</original>
    <variation>KVCDS</variation>
    <location>
        <position position="422"/>
    </location>
</feature>
<feature type="sequence conflict" description="In Ref. 5; AAK62444/AAM13241." evidence="12" ref="5">
    <original>V</original>
    <variation>A</variation>
    <location>
        <position position="33"/>
    </location>
</feature>
<name>CIPK9_ARATH</name>
<organism>
    <name type="scientific">Arabidopsis thaliana</name>
    <name type="common">Mouse-ear cress</name>
    <dbReference type="NCBI Taxonomy" id="3702"/>
    <lineage>
        <taxon>Eukaryota</taxon>
        <taxon>Viridiplantae</taxon>
        <taxon>Streptophyta</taxon>
        <taxon>Embryophyta</taxon>
        <taxon>Tracheophyta</taxon>
        <taxon>Spermatophyta</taxon>
        <taxon>Magnoliopsida</taxon>
        <taxon>eudicotyledons</taxon>
        <taxon>Gunneridae</taxon>
        <taxon>Pentapetalae</taxon>
        <taxon>rosids</taxon>
        <taxon>malvids</taxon>
        <taxon>Brassicales</taxon>
        <taxon>Brassicaceae</taxon>
        <taxon>Camelineae</taxon>
        <taxon>Arabidopsis</taxon>
    </lineage>
</organism>
<dbReference type="EC" id="2.7.11.1"/>
<dbReference type="EMBL" id="AF295664">
    <property type="protein sequence ID" value="AAK16684.1"/>
    <property type="molecule type" value="mRNA"/>
</dbReference>
<dbReference type="EMBL" id="AF339147">
    <property type="protein sequence ID" value="AAK26845.1"/>
    <property type="molecule type" value="mRNA"/>
</dbReference>
<dbReference type="EMBL" id="AC007323">
    <property type="protein sequence ID" value="AAF26468.1"/>
    <property type="molecule type" value="Genomic_DNA"/>
</dbReference>
<dbReference type="EMBL" id="CP002684">
    <property type="protein sequence ID" value="AEE27243.1"/>
    <property type="molecule type" value="Genomic_DNA"/>
</dbReference>
<dbReference type="EMBL" id="CP002684">
    <property type="protein sequence ID" value="AEE27244.1"/>
    <property type="molecule type" value="Genomic_DNA"/>
</dbReference>
<dbReference type="EMBL" id="CP002684">
    <property type="protein sequence ID" value="AEE27245.1"/>
    <property type="molecule type" value="Genomic_DNA"/>
</dbReference>
<dbReference type="EMBL" id="AF386999">
    <property type="protein sequence ID" value="AAK62444.1"/>
    <property type="molecule type" value="mRNA"/>
</dbReference>
<dbReference type="EMBL" id="AY093242">
    <property type="protein sequence ID" value="AAM13241.1"/>
    <property type="molecule type" value="mRNA"/>
</dbReference>
<dbReference type="PIR" id="G86141">
    <property type="entry name" value="G86141"/>
</dbReference>
<dbReference type="RefSeq" id="NP_171622.1">
    <molecule id="Q9MAM1-3"/>
    <property type="nucleotide sequence ID" value="NM_099996.4"/>
</dbReference>
<dbReference type="RefSeq" id="NP_849570.1">
    <molecule id="Q9MAM1-2"/>
    <property type="nucleotide sequence ID" value="NM_179239.1"/>
</dbReference>
<dbReference type="RefSeq" id="NP_849571.1">
    <molecule id="Q9MAM1-4"/>
    <property type="nucleotide sequence ID" value="NM_179240.1"/>
</dbReference>
<dbReference type="SMR" id="Q9MAM1"/>
<dbReference type="BioGRID" id="24584">
    <property type="interactions" value="27"/>
</dbReference>
<dbReference type="FunCoup" id="Q9MAM1">
    <property type="interactions" value="1454"/>
</dbReference>
<dbReference type="IntAct" id="Q9MAM1">
    <property type="interactions" value="19"/>
</dbReference>
<dbReference type="STRING" id="3702.Q9MAM1"/>
<dbReference type="iPTMnet" id="Q9MAM1"/>
<dbReference type="PaxDb" id="3702-AT1G01140.3"/>
<dbReference type="ProteomicsDB" id="246688">
    <molecule id="Q9MAM1-3"/>
</dbReference>
<dbReference type="EnsemblPlants" id="AT1G01140.1">
    <molecule id="Q9MAM1-3"/>
    <property type="protein sequence ID" value="AT1G01140.1"/>
    <property type="gene ID" value="AT1G01140"/>
</dbReference>
<dbReference type="EnsemblPlants" id="AT1G01140.2">
    <molecule id="Q9MAM1-2"/>
    <property type="protein sequence ID" value="AT1G01140.2"/>
    <property type="gene ID" value="AT1G01140"/>
</dbReference>
<dbReference type="EnsemblPlants" id="AT1G01140.3">
    <molecule id="Q9MAM1-4"/>
    <property type="protein sequence ID" value="AT1G01140.3"/>
    <property type="gene ID" value="AT1G01140"/>
</dbReference>
<dbReference type="GeneID" id="839349"/>
<dbReference type="Gramene" id="AT1G01140.1">
    <molecule id="Q9MAM1-3"/>
    <property type="protein sequence ID" value="AT1G01140.1"/>
    <property type="gene ID" value="AT1G01140"/>
</dbReference>
<dbReference type="Gramene" id="AT1G01140.2">
    <molecule id="Q9MAM1-2"/>
    <property type="protein sequence ID" value="AT1G01140.2"/>
    <property type="gene ID" value="AT1G01140"/>
</dbReference>
<dbReference type="Gramene" id="AT1G01140.3">
    <molecule id="Q9MAM1-4"/>
    <property type="protein sequence ID" value="AT1G01140.3"/>
    <property type="gene ID" value="AT1G01140"/>
</dbReference>
<dbReference type="KEGG" id="ath:AT1G01140"/>
<dbReference type="Araport" id="AT1G01140"/>
<dbReference type="TAIR" id="AT1G01140">
    <property type="gene designation" value="CIPK9"/>
</dbReference>
<dbReference type="eggNOG" id="KOG0583">
    <property type="taxonomic scope" value="Eukaryota"/>
</dbReference>
<dbReference type="HOGENOM" id="CLU_000288_59_0_1"/>
<dbReference type="InParanoid" id="Q9MAM1"/>
<dbReference type="OMA" id="KEMMGMA"/>
<dbReference type="PhylomeDB" id="Q9MAM1"/>
<dbReference type="PRO" id="PR:Q9MAM1"/>
<dbReference type="Proteomes" id="UP000006548">
    <property type="component" value="Chromosome 1"/>
</dbReference>
<dbReference type="ExpressionAtlas" id="Q9MAM1">
    <property type="expression patterns" value="baseline and differential"/>
</dbReference>
<dbReference type="GO" id="GO:0005737">
    <property type="term" value="C:cytoplasm"/>
    <property type="evidence" value="ECO:0000314"/>
    <property type="project" value="TAIR"/>
</dbReference>
<dbReference type="GO" id="GO:0005634">
    <property type="term" value="C:nucleus"/>
    <property type="evidence" value="ECO:0007669"/>
    <property type="project" value="UniProtKB-SubCell"/>
</dbReference>
<dbReference type="GO" id="GO:0005524">
    <property type="term" value="F:ATP binding"/>
    <property type="evidence" value="ECO:0007669"/>
    <property type="project" value="UniProtKB-KW"/>
</dbReference>
<dbReference type="GO" id="GO:0106310">
    <property type="term" value="F:protein serine kinase activity"/>
    <property type="evidence" value="ECO:0007669"/>
    <property type="project" value="RHEA"/>
</dbReference>
<dbReference type="GO" id="GO:0004674">
    <property type="term" value="F:protein serine/threonine kinase activity"/>
    <property type="evidence" value="ECO:0007669"/>
    <property type="project" value="UniProtKB-KW"/>
</dbReference>
<dbReference type="GO" id="GO:0051365">
    <property type="term" value="P:cellular response to potassium ion starvation"/>
    <property type="evidence" value="ECO:0000315"/>
    <property type="project" value="TAIR"/>
</dbReference>
<dbReference type="GO" id="GO:0055075">
    <property type="term" value="P:potassium ion homeostasis"/>
    <property type="evidence" value="ECO:0000315"/>
    <property type="project" value="TAIR"/>
</dbReference>
<dbReference type="GO" id="GO:0043266">
    <property type="term" value="P:regulation of potassium ion transport"/>
    <property type="evidence" value="ECO:0000315"/>
    <property type="project" value="TAIR"/>
</dbReference>
<dbReference type="GO" id="GO:0009409">
    <property type="term" value="P:response to cold"/>
    <property type="evidence" value="ECO:0000270"/>
    <property type="project" value="TAIR"/>
</dbReference>
<dbReference type="GO" id="GO:0010555">
    <property type="term" value="P:response to mannitol"/>
    <property type="evidence" value="ECO:0000270"/>
    <property type="project" value="TAIR"/>
</dbReference>
<dbReference type="GO" id="GO:0009651">
    <property type="term" value="P:response to salt stress"/>
    <property type="evidence" value="ECO:0000270"/>
    <property type="project" value="TAIR"/>
</dbReference>
<dbReference type="GO" id="GO:0009611">
    <property type="term" value="P:response to wounding"/>
    <property type="evidence" value="ECO:0000270"/>
    <property type="project" value="TAIR"/>
</dbReference>
<dbReference type="GO" id="GO:0007165">
    <property type="term" value="P:signal transduction"/>
    <property type="evidence" value="ECO:0007669"/>
    <property type="project" value="InterPro"/>
</dbReference>
<dbReference type="CDD" id="cd12195">
    <property type="entry name" value="CIPK_C"/>
    <property type="match status" value="1"/>
</dbReference>
<dbReference type="CDD" id="cd14663">
    <property type="entry name" value="STKc_SnRK3"/>
    <property type="match status" value="1"/>
</dbReference>
<dbReference type="FunFam" id="1.10.510.10:FF:000279">
    <property type="entry name" value="Non-specific serine/threonine protein kinase"/>
    <property type="match status" value="1"/>
</dbReference>
<dbReference type="FunFam" id="3.30.200.20:FF:000096">
    <property type="entry name" value="Non-specific serine/threonine protein kinase"/>
    <property type="match status" value="1"/>
</dbReference>
<dbReference type="FunFam" id="3.30.310.80:FF:000002">
    <property type="entry name" value="Non-specific serine/threonine protein kinase"/>
    <property type="match status" value="1"/>
</dbReference>
<dbReference type="Gene3D" id="3.30.310.80">
    <property type="entry name" value="Kinase associated domain 1, KA1"/>
    <property type="match status" value="1"/>
</dbReference>
<dbReference type="Gene3D" id="3.30.200.20">
    <property type="entry name" value="Phosphorylase Kinase, domain 1"/>
    <property type="match status" value="1"/>
</dbReference>
<dbReference type="Gene3D" id="1.10.510.10">
    <property type="entry name" value="Transferase(Phosphotransferase) domain 1"/>
    <property type="match status" value="1"/>
</dbReference>
<dbReference type="InterPro" id="IPR011009">
    <property type="entry name" value="Kinase-like_dom_sf"/>
</dbReference>
<dbReference type="InterPro" id="IPR018451">
    <property type="entry name" value="NAF/FISL_domain"/>
</dbReference>
<dbReference type="InterPro" id="IPR004041">
    <property type="entry name" value="NAF_dom"/>
</dbReference>
<dbReference type="InterPro" id="IPR000719">
    <property type="entry name" value="Prot_kinase_dom"/>
</dbReference>
<dbReference type="InterPro" id="IPR017441">
    <property type="entry name" value="Protein_kinase_ATP_BS"/>
</dbReference>
<dbReference type="InterPro" id="IPR008271">
    <property type="entry name" value="Ser/Thr_kinase_AS"/>
</dbReference>
<dbReference type="PANTHER" id="PTHR43895">
    <property type="entry name" value="CALCIUM/CALMODULIN-DEPENDENT PROTEIN KINASE KINASE-RELATED"/>
    <property type="match status" value="1"/>
</dbReference>
<dbReference type="PANTHER" id="PTHR43895:SF145">
    <property type="entry name" value="CBL-INTERACTING SERINE_THREONINE-PROTEIN KINASE 9"/>
    <property type="match status" value="1"/>
</dbReference>
<dbReference type="Pfam" id="PF03822">
    <property type="entry name" value="NAF"/>
    <property type="match status" value="1"/>
</dbReference>
<dbReference type="Pfam" id="PF00069">
    <property type="entry name" value="Pkinase"/>
    <property type="match status" value="1"/>
</dbReference>
<dbReference type="SMART" id="SM00220">
    <property type="entry name" value="S_TKc"/>
    <property type="match status" value="1"/>
</dbReference>
<dbReference type="SUPFAM" id="SSF56112">
    <property type="entry name" value="Protein kinase-like (PK-like)"/>
    <property type="match status" value="1"/>
</dbReference>
<dbReference type="PROSITE" id="PS50816">
    <property type="entry name" value="NAF"/>
    <property type="match status" value="1"/>
</dbReference>
<dbReference type="PROSITE" id="PS00107">
    <property type="entry name" value="PROTEIN_KINASE_ATP"/>
    <property type="match status" value="1"/>
</dbReference>
<dbReference type="PROSITE" id="PS50011">
    <property type="entry name" value="PROTEIN_KINASE_DOM"/>
    <property type="match status" value="1"/>
</dbReference>
<dbReference type="PROSITE" id="PS00108">
    <property type="entry name" value="PROTEIN_KINASE_ST"/>
    <property type="match status" value="1"/>
</dbReference>